<organism>
    <name type="scientific">Pyrococcus horikoshii (strain ATCC 700860 / DSM 12428 / JCM 9974 / NBRC 100139 / OT-3)</name>
    <dbReference type="NCBI Taxonomy" id="70601"/>
    <lineage>
        <taxon>Archaea</taxon>
        <taxon>Methanobacteriati</taxon>
        <taxon>Methanobacteriota</taxon>
        <taxon>Thermococci</taxon>
        <taxon>Thermococcales</taxon>
        <taxon>Thermococcaceae</taxon>
        <taxon>Pyrococcus</taxon>
    </lineage>
</organism>
<feature type="chain" id="PRO_0000184973" description="Mannosyl-3-phosphoglycerate phosphatase">
    <location>
        <begin position="1"/>
        <end position="243"/>
    </location>
</feature>
<feature type="active site" description="Nucleophile" evidence="1 6">
    <location>
        <position position="8"/>
    </location>
</feature>
<feature type="binding site" evidence="1 3">
    <location>
        <position position="8"/>
    </location>
    <ligand>
        <name>Mg(2+)</name>
        <dbReference type="ChEBI" id="CHEBI:18420"/>
    </ligand>
</feature>
<feature type="binding site" evidence="1 3">
    <location>
        <position position="10"/>
    </location>
    <ligand>
        <name>Mg(2+)</name>
        <dbReference type="ChEBI" id="CHEBI:18420"/>
    </ligand>
</feature>
<feature type="binding site" evidence="1 3">
    <location>
        <position position="169"/>
    </location>
    <ligand>
        <name>Mg(2+)</name>
        <dbReference type="ChEBI" id="CHEBI:18420"/>
    </ligand>
</feature>
<feature type="binding site" evidence="1 3">
    <location>
        <position position="204"/>
    </location>
    <ligand>
        <name>Mg(2+)</name>
        <dbReference type="ChEBI" id="CHEBI:18420"/>
    </ligand>
</feature>
<feature type="strand" evidence="8">
    <location>
        <begin position="2"/>
        <end position="7"/>
    </location>
</feature>
<feature type="turn" evidence="8">
    <location>
        <begin position="11"/>
        <end position="13"/>
    </location>
</feature>
<feature type="strand" evidence="7">
    <location>
        <begin position="14"/>
        <end position="17"/>
    </location>
</feature>
<feature type="helix" evidence="8">
    <location>
        <begin position="20"/>
        <end position="22"/>
    </location>
</feature>
<feature type="helix" evidence="8">
    <location>
        <begin position="23"/>
        <end position="31"/>
    </location>
</feature>
<feature type="strand" evidence="8">
    <location>
        <begin position="34"/>
        <end position="39"/>
    </location>
</feature>
<feature type="helix" evidence="8">
    <location>
        <begin position="44"/>
        <end position="54"/>
    </location>
</feature>
<feature type="strand" evidence="8">
    <location>
        <begin position="60"/>
        <end position="62"/>
    </location>
</feature>
<feature type="turn" evidence="8">
    <location>
        <begin position="63"/>
        <end position="66"/>
    </location>
</feature>
<feature type="strand" evidence="8">
    <location>
        <begin position="67"/>
        <end position="69"/>
    </location>
</feature>
<feature type="strand" evidence="7">
    <location>
        <begin position="81"/>
        <end position="84"/>
    </location>
</feature>
<feature type="strand" evidence="8">
    <location>
        <begin position="89"/>
        <end position="91"/>
    </location>
</feature>
<feature type="helix" evidence="8">
    <location>
        <begin position="96"/>
        <end position="110"/>
    </location>
</feature>
<feature type="helix" evidence="8">
    <location>
        <begin position="115"/>
        <end position="117"/>
    </location>
</feature>
<feature type="helix" evidence="8">
    <location>
        <begin position="120"/>
        <end position="127"/>
    </location>
</feature>
<feature type="turn" evidence="8">
    <location>
        <begin position="131"/>
        <end position="133"/>
    </location>
</feature>
<feature type="helix" evidence="8">
    <location>
        <begin position="134"/>
        <end position="138"/>
    </location>
</feature>
<feature type="strand" evidence="8">
    <location>
        <begin position="144"/>
        <end position="148"/>
    </location>
</feature>
<feature type="strand" evidence="8">
    <location>
        <begin position="150"/>
        <end position="152"/>
    </location>
</feature>
<feature type="helix" evidence="8">
    <location>
        <begin position="154"/>
        <end position="160"/>
    </location>
</feature>
<feature type="strand" evidence="8">
    <location>
        <begin position="164"/>
        <end position="167"/>
    </location>
</feature>
<feature type="strand" evidence="8">
    <location>
        <begin position="169"/>
        <end position="175"/>
    </location>
</feature>
<feature type="helix" evidence="8">
    <location>
        <begin position="180"/>
        <end position="192"/>
    </location>
</feature>
<feature type="strand" evidence="8">
    <location>
        <begin position="197"/>
        <end position="203"/>
    </location>
</feature>
<feature type="helix" evidence="8">
    <location>
        <begin position="206"/>
        <end position="208"/>
    </location>
</feature>
<feature type="helix" evidence="8">
    <location>
        <begin position="209"/>
        <end position="212"/>
    </location>
</feature>
<feature type="strand" evidence="8">
    <location>
        <begin position="215"/>
        <end position="223"/>
    </location>
</feature>
<feature type="strand" evidence="8">
    <location>
        <begin position="229"/>
        <end position="234"/>
    </location>
</feature>
<feature type="helix" evidence="8">
    <location>
        <begin position="235"/>
        <end position="243"/>
    </location>
</feature>
<proteinExistence type="evidence at protein level"/>
<accession>O58690</accession>
<protein>
    <recommendedName>
        <fullName evidence="1 4 5">Mannosyl-3-phosphoglycerate phosphatase</fullName>
        <shortName evidence="1">MPGP</shortName>
        <ecNumber evidence="1 2">3.1.3.70</ecNumber>
    </recommendedName>
</protein>
<reference key="1">
    <citation type="journal article" date="1998" name="DNA Res.">
        <title>Complete sequence and gene organization of the genome of a hyper-thermophilic archaebacterium, Pyrococcus horikoshii OT3.</title>
        <authorList>
            <person name="Kawarabayasi Y."/>
            <person name="Sawada M."/>
            <person name="Horikawa H."/>
            <person name="Haikawa Y."/>
            <person name="Hino Y."/>
            <person name="Yamamoto S."/>
            <person name="Sekine M."/>
            <person name="Baba S."/>
            <person name="Kosugi H."/>
            <person name="Hosoyama A."/>
            <person name="Nagai Y."/>
            <person name="Sakai M."/>
            <person name="Ogura K."/>
            <person name="Otsuka R."/>
            <person name="Nakazawa H."/>
            <person name="Takamiya M."/>
            <person name="Ohfuku Y."/>
            <person name="Funahashi T."/>
            <person name="Tanaka T."/>
            <person name="Kudoh Y."/>
            <person name="Yamazaki J."/>
            <person name="Kushida N."/>
            <person name="Oguchi A."/>
            <person name="Aoki K."/>
            <person name="Yoshizawa T."/>
            <person name="Nakamura Y."/>
            <person name="Robb F.T."/>
            <person name="Horikoshi K."/>
            <person name="Masuchi Y."/>
            <person name="Shizuya H."/>
            <person name="Kikuchi H."/>
        </authorList>
    </citation>
    <scope>NUCLEOTIDE SEQUENCE [LARGE SCALE GENOMIC DNA]</scope>
    <source>
        <strain>ATCC 700860 / DSM 12428 / JCM 9974 / NBRC 100139 / OT-3</strain>
    </source>
</reference>
<reference key="2">
    <citation type="journal article" date="2001" name="J. Biol. Chem.">
        <title>Pathway for the synthesis of mannosylglycerate in the hyperthermophilic archaeon Pyrococcus horikoshii. Biochemical and genetic characterization of key enzymes.</title>
        <authorList>
            <person name="Empadinhas N."/>
            <person name="Marugg J.D."/>
            <person name="Borges N."/>
            <person name="Santos H."/>
            <person name="da Costa M.S."/>
        </authorList>
    </citation>
    <scope>FUNCTION</scope>
    <scope>CATALYTIC ACTIVITY</scope>
    <scope>COFACTOR</scope>
    <source>
        <strain>ATCC 700860 / DSM 12428 / JCM 9974 / NBRC 100139 / OT-3</strain>
    </source>
</reference>
<reference key="3">
    <citation type="journal article" date="2008" name="Acta Crystallogr. D">
        <title>Structure of mannosyl-3-phosphoglycerate phosphatase from Pyrococcus horikoshii.</title>
        <authorList>
            <person name="Kawamura T."/>
            <person name="Watanabe N."/>
            <person name="Tanaka I."/>
        </authorList>
    </citation>
    <scope>X-RAY CRYSTALLOGRAPHY (1.70 ANGSTROMS) IN COMPLEX WITH MAGNESIUM</scope>
    <scope>COFACTOR</scope>
</reference>
<sequence>MIRLIFLDIDKTLIPGYEPDPAKPIIEELKDMGFEIIFNSSKTRAEQEYYRKELEVETPFISENGSAIFIPKGYFPFDVKGKEVGNYIVIELGIRVEKIREELKKLENIYGLKYYGNSTKEEIEKFTGMPPELVPLAMEREYSETIFEWSRDGWEEVLVEGGFKVTMGSRFYTVHGNSDKGKAAKILLDFYKRLGQIESYAVGDSYNDFPMFEVVDKAFIVGSLKHKKAQNVSSIIDVLEVIK</sequence>
<keyword id="KW-0002">3D-structure</keyword>
<keyword id="KW-0963">Cytoplasm</keyword>
<keyword id="KW-0378">Hydrolase</keyword>
<keyword id="KW-0460">Magnesium</keyword>
<keyword id="KW-0479">Metal-binding</keyword>
<gene>
    <name evidence="1" type="primary">mngB</name>
    <name type="ordered locus">PH0926</name>
</gene>
<evidence type="ECO:0000255" key="1">
    <source>
        <dbReference type="HAMAP-Rule" id="MF_00617"/>
    </source>
</evidence>
<evidence type="ECO:0000269" key="2">
    <source>
    </source>
</evidence>
<evidence type="ECO:0000269" key="3">
    <source>
    </source>
</evidence>
<evidence type="ECO:0000303" key="4">
    <source>
    </source>
</evidence>
<evidence type="ECO:0000303" key="5">
    <source>
    </source>
</evidence>
<evidence type="ECO:0000305" key="6"/>
<evidence type="ECO:0007829" key="7">
    <source>
        <dbReference type="PDB" id="1WZC"/>
    </source>
</evidence>
<evidence type="ECO:0007829" key="8">
    <source>
        <dbReference type="PDB" id="2ZOS"/>
    </source>
</evidence>
<dbReference type="EC" id="3.1.3.70" evidence="1 2"/>
<dbReference type="EMBL" id="BA000001">
    <property type="protein sequence ID" value="BAA30022.1"/>
    <property type="molecule type" value="Genomic_DNA"/>
</dbReference>
<dbReference type="PIR" id="H71082">
    <property type="entry name" value="H71082"/>
</dbReference>
<dbReference type="RefSeq" id="WP_010885016.1">
    <property type="nucleotide sequence ID" value="NC_000961.1"/>
</dbReference>
<dbReference type="PDB" id="1WZC">
    <property type="method" value="X-ray"/>
    <property type="resolution" value="1.90 A"/>
    <property type="chains" value="A/B=1-243"/>
</dbReference>
<dbReference type="PDB" id="2ZOS">
    <property type="method" value="X-ray"/>
    <property type="resolution" value="1.70 A"/>
    <property type="chains" value="A/B=1-243"/>
</dbReference>
<dbReference type="PDBsum" id="1WZC"/>
<dbReference type="PDBsum" id="2ZOS"/>
<dbReference type="SMR" id="O58690"/>
<dbReference type="STRING" id="70601.gene:9377879"/>
<dbReference type="EnsemblBacteria" id="BAA30022">
    <property type="protein sequence ID" value="BAA30022"/>
    <property type="gene ID" value="BAA30022"/>
</dbReference>
<dbReference type="GeneID" id="1443251"/>
<dbReference type="KEGG" id="pho:PH0926"/>
<dbReference type="eggNOG" id="arCOG01215">
    <property type="taxonomic scope" value="Archaea"/>
</dbReference>
<dbReference type="OrthoDB" id="120822at2157"/>
<dbReference type="BioCyc" id="MetaCyc:MONOMER-13379"/>
<dbReference type="BRENDA" id="2.4.1.217">
    <property type="organism ID" value="5244"/>
</dbReference>
<dbReference type="BRENDA" id="3.1.3.70">
    <property type="organism ID" value="5244"/>
</dbReference>
<dbReference type="SABIO-RK" id="O58690"/>
<dbReference type="UniPathway" id="UPA00130">
    <property type="reaction ID" value="UER00193"/>
</dbReference>
<dbReference type="EvolutionaryTrace" id="O58690"/>
<dbReference type="Proteomes" id="UP000000752">
    <property type="component" value="Chromosome"/>
</dbReference>
<dbReference type="GO" id="GO:0005829">
    <property type="term" value="C:cytosol"/>
    <property type="evidence" value="ECO:0007669"/>
    <property type="project" value="TreeGrafter"/>
</dbReference>
<dbReference type="GO" id="GO:0000287">
    <property type="term" value="F:magnesium ion binding"/>
    <property type="evidence" value="ECO:0007669"/>
    <property type="project" value="TreeGrafter"/>
</dbReference>
<dbReference type="GO" id="GO:0050531">
    <property type="term" value="F:mannosyl-3-phosphoglycerate phosphatase activity"/>
    <property type="evidence" value="ECO:0007669"/>
    <property type="project" value="UniProtKB-UniRule"/>
</dbReference>
<dbReference type="GO" id="GO:0051479">
    <property type="term" value="P:mannosylglycerate biosynthetic process"/>
    <property type="evidence" value="ECO:0007669"/>
    <property type="project" value="UniProtKB-UniRule"/>
</dbReference>
<dbReference type="CDD" id="cd07507">
    <property type="entry name" value="HAD_Pase"/>
    <property type="match status" value="1"/>
</dbReference>
<dbReference type="Gene3D" id="3.40.50.1000">
    <property type="entry name" value="HAD superfamily/HAD-like"/>
    <property type="match status" value="1"/>
</dbReference>
<dbReference type="Gene3D" id="3.30.980.20">
    <property type="entry name" value="Putative mannosyl-3-phosphoglycerate phosphatase, domain 2"/>
    <property type="match status" value="1"/>
</dbReference>
<dbReference type="HAMAP" id="MF_00617">
    <property type="entry name" value="MPGP_rel"/>
    <property type="match status" value="1"/>
</dbReference>
<dbReference type="InterPro" id="IPR036412">
    <property type="entry name" value="HAD-like_sf"/>
</dbReference>
<dbReference type="InterPro" id="IPR006381">
    <property type="entry name" value="HAD-SF-IIB-MPGP"/>
</dbReference>
<dbReference type="InterPro" id="IPR006379">
    <property type="entry name" value="HAD-SF_hydro_IIB"/>
</dbReference>
<dbReference type="InterPro" id="IPR023214">
    <property type="entry name" value="HAD_sf"/>
</dbReference>
<dbReference type="InterPro" id="IPR012815">
    <property type="entry name" value="MPG_Pase"/>
</dbReference>
<dbReference type="InterPro" id="IPR033980">
    <property type="entry name" value="MPG_Pase_thermophiles"/>
</dbReference>
<dbReference type="NCBIfam" id="TIGR01484">
    <property type="entry name" value="HAD-SF-IIB"/>
    <property type="match status" value="1"/>
</dbReference>
<dbReference type="NCBIfam" id="TIGR01486">
    <property type="entry name" value="HAD-SF-IIB-MPGP"/>
    <property type="match status" value="1"/>
</dbReference>
<dbReference type="NCBIfam" id="TIGR02461">
    <property type="entry name" value="osmo_MPG_phos"/>
    <property type="match status" value="1"/>
</dbReference>
<dbReference type="PANTHER" id="PTHR10000:SF8">
    <property type="entry name" value="HAD SUPERFAMILY HYDROLASE-LIKE, TYPE 3"/>
    <property type="match status" value="1"/>
</dbReference>
<dbReference type="PANTHER" id="PTHR10000">
    <property type="entry name" value="PHOSPHOSERINE PHOSPHATASE"/>
    <property type="match status" value="1"/>
</dbReference>
<dbReference type="Pfam" id="PF08282">
    <property type="entry name" value="Hydrolase_3"/>
    <property type="match status" value="2"/>
</dbReference>
<dbReference type="SFLD" id="SFLDG01140">
    <property type="entry name" value="C2.B:_Phosphomannomutase_and_P"/>
    <property type="match status" value="1"/>
</dbReference>
<dbReference type="SFLD" id="SFLDF00042">
    <property type="entry name" value="mannosyl-3-phosphoglycerate_ph"/>
    <property type="match status" value="1"/>
</dbReference>
<dbReference type="SUPFAM" id="SSF56784">
    <property type="entry name" value="HAD-like"/>
    <property type="match status" value="1"/>
</dbReference>
<comment type="function">
    <text evidence="2">Hydrolyzes mannosyl-3-phosphoglycerate (MPG) to form the osmolyte mannosylglycerate (MG). The enzyme is absolutely specific for MPG.</text>
</comment>
<comment type="catalytic activity">
    <reaction evidence="1 2">
        <text>2-O-(alpha-D-mannosyl)-3-phosphoglycerate + H2O = (2R)-2-O-(alpha-D-mannosyl)-glycerate + phosphate</text>
        <dbReference type="Rhea" id="RHEA:19309"/>
        <dbReference type="ChEBI" id="CHEBI:15377"/>
        <dbReference type="ChEBI" id="CHEBI:43474"/>
        <dbReference type="ChEBI" id="CHEBI:57541"/>
        <dbReference type="ChEBI" id="CHEBI:57744"/>
        <dbReference type="EC" id="3.1.3.70"/>
    </reaction>
</comment>
<comment type="cofactor">
    <cofactor evidence="1 2 3">
        <name>Mg(2+)</name>
        <dbReference type="ChEBI" id="CHEBI:18420"/>
    </cofactor>
</comment>
<comment type="pathway">
    <text evidence="1">Carbohydrate biosynthesis; 2-(alpha-D-mannosyl)-D-glycerate biosynthesis; 2-(alpha-D-mannosyl)-D-glycerate from GDP-alpha-D-mannose (MPG route): step 2/2.</text>
</comment>
<comment type="subcellular location">
    <subcellularLocation>
        <location evidence="1">Cytoplasm</location>
    </subcellularLocation>
</comment>
<comment type="similarity">
    <text evidence="1">Belongs to the HAD-like hydrolase superfamily. MPGP family.</text>
</comment>
<name>MPGP_PYRHO</name>